<comment type="function">
    <text>Required for the activity of the bacterial periplasmic transport system of putrescine and spermidine.</text>
</comment>
<comment type="subcellular location">
    <subcellularLocation>
        <location>Cell inner membrane</location>
        <topology>Multi-pass membrane protein</topology>
    </subcellularLocation>
</comment>
<comment type="similarity">
    <text evidence="3">Belongs to the binding-protein-dependent transport system permease family. CysTW subfamily.</text>
</comment>
<keyword id="KW-0002">3D-structure</keyword>
<keyword id="KW-0997">Cell inner membrane</keyword>
<keyword id="KW-1003">Cell membrane</keyword>
<keyword id="KW-0472">Membrane</keyword>
<keyword id="KW-1185">Reference proteome</keyword>
<keyword id="KW-0812">Transmembrane</keyword>
<keyword id="KW-1133">Transmembrane helix</keyword>
<keyword id="KW-0813">Transport</keyword>
<accession>P0AFK4</accession>
<accession>P23860</accession>
<sequence length="275" mass="31062">MIVTIVGWLVLFVFLPNLMIIGTSFLTRDDASFVKMVFTLDNYTRLLDPLYFEVLLHSLNMALIATLACLVLGYPFAWFLAKLPHKVRPLLLFLLIVPFWTNSLIRIYGLKIFLSTKGYLNEFLLWLGVIDTPIRIMFTPSAVIIGLVYILLPFMVMPLYSSIEKLDKPLLEAARDLGASKLQTFIRIIIPLTMPGIIAGCLLVMLPAMGLFYVSDLMGGAKNLLIGNVIKVQFLNIRDWPFGAATSITLTIVMGLMLLVYWRASRLLNKKVELE</sequence>
<protein>
    <recommendedName>
        <fullName>Spermidine/putrescine transport system permease protein PotB</fullName>
    </recommendedName>
</protein>
<dbReference type="EMBL" id="M64519">
    <property type="protein sequence ID" value="AAC37039.1"/>
    <property type="molecule type" value="Genomic_DNA"/>
</dbReference>
<dbReference type="EMBL" id="U00096">
    <property type="protein sequence ID" value="AAC74209.1"/>
    <property type="molecule type" value="Genomic_DNA"/>
</dbReference>
<dbReference type="EMBL" id="AP009048">
    <property type="protein sequence ID" value="BAA35945.1"/>
    <property type="molecule type" value="Genomic_DNA"/>
</dbReference>
<dbReference type="PIR" id="B40840">
    <property type="entry name" value="B40840"/>
</dbReference>
<dbReference type="RefSeq" id="NP_415643.3">
    <property type="nucleotide sequence ID" value="NC_000913.3"/>
</dbReference>
<dbReference type="PDB" id="8Y5F">
    <property type="method" value="EM"/>
    <property type="resolution" value="3.13 A"/>
    <property type="chains" value="B=1-275"/>
</dbReference>
<dbReference type="PDB" id="8Y5G">
    <property type="method" value="EM"/>
    <property type="resolution" value="3.00 A"/>
    <property type="chains" value="B=1-269"/>
</dbReference>
<dbReference type="PDB" id="8Y5H">
    <property type="method" value="EM"/>
    <property type="resolution" value="3.10 A"/>
    <property type="chains" value="B=1-275"/>
</dbReference>
<dbReference type="PDB" id="8Y5I">
    <property type="method" value="EM"/>
    <property type="resolution" value="3.00 A"/>
    <property type="chains" value="B=1-275"/>
</dbReference>
<dbReference type="PDB" id="8ZX1">
    <property type="method" value="EM"/>
    <property type="resolution" value="3.50 A"/>
    <property type="chains" value="B=1-275"/>
</dbReference>
<dbReference type="PDBsum" id="8Y5F"/>
<dbReference type="PDBsum" id="8Y5G"/>
<dbReference type="PDBsum" id="8Y5H"/>
<dbReference type="PDBsum" id="8Y5I"/>
<dbReference type="PDBsum" id="8ZX1"/>
<dbReference type="SMR" id="P0AFK4"/>
<dbReference type="BioGRID" id="4261673">
    <property type="interactions" value="21"/>
</dbReference>
<dbReference type="ComplexPortal" id="CPX-4383">
    <property type="entry name" value="Spermidine ABC transporter complex"/>
</dbReference>
<dbReference type="FunCoup" id="P0AFK4">
    <property type="interactions" value="292"/>
</dbReference>
<dbReference type="STRING" id="511145.b1125"/>
<dbReference type="TCDB" id="3.A.1.11.1">
    <property type="family name" value="the atp-binding cassette (abc) superfamily"/>
</dbReference>
<dbReference type="jPOST" id="P0AFK4"/>
<dbReference type="PaxDb" id="511145-b1125"/>
<dbReference type="EnsemblBacteria" id="AAC74209">
    <property type="protein sequence ID" value="AAC74209"/>
    <property type="gene ID" value="b1125"/>
</dbReference>
<dbReference type="GeneID" id="945692"/>
<dbReference type="KEGG" id="ecj:JW1111"/>
<dbReference type="KEGG" id="eco:b1125"/>
<dbReference type="PATRIC" id="fig|511145.12.peg.1171"/>
<dbReference type="EchoBASE" id="EB0743"/>
<dbReference type="eggNOG" id="COG1176">
    <property type="taxonomic scope" value="Bacteria"/>
</dbReference>
<dbReference type="HOGENOM" id="CLU_016047_18_3_6"/>
<dbReference type="InParanoid" id="P0AFK4"/>
<dbReference type="OMA" id="VIRTYAW"/>
<dbReference type="PhylomeDB" id="P0AFK4"/>
<dbReference type="BioCyc" id="EcoCyc:POTB-MONOMER"/>
<dbReference type="BioCyc" id="MetaCyc:POTB-MONOMER"/>
<dbReference type="PRO" id="PR:P0AFK4"/>
<dbReference type="Proteomes" id="UP000000625">
    <property type="component" value="Chromosome"/>
</dbReference>
<dbReference type="GO" id="GO:0043190">
    <property type="term" value="C:ATP-binding cassette (ABC) transporter complex"/>
    <property type="evidence" value="ECO:0000304"/>
    <property type="project" value="EcoCyc"/>
</dbReference>
<dbReference type="GO" id="GO:0016020">
    <property type="term" value="C:membrane"/>
    <property type="evidence" value="ECO:0000303"/>
    <property type="project" value="ComplexPortal"/>
</dbReference>
<dbReference type="GO" id="GO:0005886">
    <property type="term" value="C:plasma membrane"/>
    <property type="evidence" value="ECO:0000314"/>
    <property type="project" value="EcoCyc"/>
</dbReference>
<dbReference type="GO" id="GO:0015417">
    <property type="term" value="F:ABC-type polyamine transporter activity"/>
    <property type="evidence" value="ECO:0000314"/>
    <property type="project" value="EcoCyc"/>
</dbReference>
<dbReference type="GO" id="GO:0015847">
    <property type="term" value="P:putrescine transport"/>
    <property type="evidence" value="ECO:0000314"/>
    <property type="project" value="EcoCyc"/>
</dbReference>
<dbReference type="GO" id="GO:1903711">
    <property type="term" value="P:spermidine transmembrane transport"/>
    <property type="evidence" value="ECO:0000314"/>
    <property type="project" value="EcoCyc"/>
</dbReference>
<dbReference type="CDD" id="cd06261">
    <property type="entry name" value="TM_PBP2"/>
    <property type="match status" value="1"/>
</dbReference>
<dbReference type="FunFam" id="1.10.3720.10:FF:000029">
    <property type="entry name" value="Spermidine/putrescine ABC transporter permease PotB"/>
    <property type="match status" value="1"/>
</dbReference>
<dbReference type="Gene3D" id="1.10.3720.10">
    <property type="entry name" value="MetI-like"/>
    <property type="match status" value="1"/>
</dbReference>
<dbReference type="InterPro" id="IPR000515">
    <property type="entry name" value="MetI-like"/>
</dbReference>
<dbReference type="InterPro" id="IPR035906">
    <property type="entry name" value="MetI-like_sf"/>
</dbReference>
<dbReference type="NCBIfam" id="NF007044">
    <property type="entry name" value="PRK09497.1"/>
    <property type="match status" value="1"/>
</dbReference>
<dbReference type="PANTHER" id="PTHR42929:SF1">
    <property type="entry name" value="INNER MEMBRANE ABC TRANSPORTER PERMEASE PROTEIN YDCU-RELATED"/>
    <property type="match status" value="1"/>
</dbReference>
<dbReference type="PANTHER" id="PTHR42929">
    <property type="entry name" value="INNER MEMBRANE ABC TRANSPORTER PERMEASE PROTEIN YDCU-RELATED-RELATED"/>
    <property type="match status" value="1"/>
</dbReference>
<dbReference type="Pfam" id="PF00528">
    <property type="entry name" value="BPD_transp_1"/>
    <property type="match status" value="1"/>
</dbReference>
<dbReference type="SUPFAM" id="SSF161098">
    <property type="entry name" value="MetI-like"/>
    <property type="match status" value="1"/>
</dbReference>
<dbReference type="PROSITE" id="PS50928">
    <property type="entry name" value="ABC_TM1"/>
    <property type="match status" value="1"/>
</dbReference>
<reference key="1">
    <citation type="journal article" date="1991" name="J. Biol. Chem.">
        <title>Characteristics of the gene for a spermidine and putrescine transport system that maps at 15 min on the Escherichia coli chromosome.</title>
        <authorList>
            <person name="Furuchi T."/>
            <person name="Kashiwagi K."/>
            <person name="Kobayashi H."/>
            <person name="Igarashi K."/>
        </authorList>
    </citation>
    <scope>NUCLEOTIDE SEQUENCE [GENOMIC DNA]</scope>
    <source>
        <strain>K12</strain>
    </source>
</reference>
<reference key="2">
    <citation type="journal article" date="1996" name="DNA Res.">
        <title>A 718-kb DNA sequence of the Escherichia coli K-12 genome corresponding to the 12.7-28.0 min region on the linkage map.</title>
        <authorList>
            <person name="Oshima T."/>
            <person name="Aiba H."/>
            <person name="Baba T."/>
            <person name="Fujita K."/>
            <person name="Hayashi K."/>
            <person name="Honjo A."/>
            <person name="Ikemoto K."/>
            <person name="Inada T."/>
            <person name="Itoh T."/>
            <person name="Kajihara M."/>
            <person name="Kanai K."/>
            <person name="Kashimoto K."/>
            <person name="Kimura S."/>
            <person name="Kitagawa M."/>
            <person name="Makino K."/>
            <person name="Masuda S."/>
            <person name="Miki T."/>
            <person name="Mizobuchi K."/>
            <person name="Mori H."/>
            <person name="Motomura K."/>
            <person name="Nakamura Y."/>
            <person name="Nashimoto H."/>
            <person name="Nishio Y."/>
            <person name="Saito N."/>
            <person name="Sampei G."/>
            <person name="Seki Y."/>
            <person name="Tagami H."/>
            <person name="Takemoto K."/>
            <person name="Wada C."/>
            <person name="Yamamoto Y."/>
            <person name="Yano M."/>
            <person name="Horiuchi T."/>
        </authorList>
    </citation>
    <scope>NUCLEOTIDE SEQUENCE [LARGE SCALE GENOMIC DNA]</scope>
    <source>
        <strain>K12 / W3110 / ATCC 27325 / DSM 5911</strain>
    </source>
</reference>
<reference key="3">
    <citation type="journal article" date="1997" name="Science">
        <title>The complete genome sequence of Escherichia coli K-12.</title>
        <authorList>
            <person name="Blattner F.R."/>
            <person name="Plunkett G. III"/>
            <person name="Bloch C.A."/>
            <person name="Perna N.T."/>
            <person name="Burland V."/>
            <person name="Riley M."/>
            <person name="Collado-Vides J."/>
            <person name="Glasner J.D."/>
            <person name="Rode C.K."/>
            <person name="Mayhew G.F."/>
            <person name="Gregor J."/>
            <person name="Davis N.W."/>
            <person name="Kirkpatrick H.A."/>
            <person name="Goeden M.A."/>
            <person name="Rose D.J."/>
            <person name="Mau B."/>
            <person name="Shao Y."/>
        </authorList>
    </citation>
    <scope>NUCLEOTIDE SEQUENCE [LARGE SCALE GENOMIC DNA]</scope>
    <source>
        <strain>K12 / MG1655 / ATCC 47076</strain>
    </source>
</reference>
<reference key="4">
    <citation type="journal article" date="2006" name="Mol. Syst. Biol.">
        <title>Highly accurate genome sequences of Escherichia coli K-12 strains MG1655 and W3110.</title>
        <authorList>
            <person name="Hayashi K."/>
            <person name="Morooka N."/>
            <person name="Yamamoto Y."/>
            <person name="Fujita K."/>
            <person name="Isono K."/>
            <person name="Choi S."/>
            <person name="Ohtsubo E."/>
            <person name="Baba T."/>
            <person name="Wanner B.L."/>
            <person name="Mori H."/>
            <person name="Horiuchi T."/>
        </authorList>
    </citation>
    <scope>NUCLEOTIDE SEQUENCE [LARGE SCALE GENOMIC DNA]</scope>
    <source>
        <strain>K12 / W3110 / ATCC 27325 / DSM 5911</strain>
    </source>
</reference>
<reference key="5">
    <citation type="journal article" date="2005" name="Science">
        <title>Global topology analysis of the Escherichia coli inner membrane proteome.</title>
        <authorList>
            <person name="Daley D.O."/>
            <person name="Rapp M."/>
            <person name="Granseth E."/>
            <person name="Melen K."/>
            <person name="Drew D."/>
            <person name="von Heijne G."/>
        </authorList>
    </citation>
    <scope>TOPOLOGY [LARGE SCALE ANALYSIS]</scope>
    <source>
        <strain>K12 / MG1655 / ATCC 47076</strain>
    </source>
</reference>
<gene>
    <name type="primary">potB</name>
    <name type="ordered locus">b1125</name>
    <name type="ordered locus">JW1111</name>
</gene>
<evidence type="ECO:0000255" key="1"/>
<evidence type="ECO:0000255" key="2">
    <source>
        <dbReference type="PROSITE-ProRule" id="PRU00441"/>
    </source>
</evidence>
<evidence type="ECO:0000305" key="3"/>
<organism>
    <name type="scientific">Escherichia coli (strain K12)</name>
    <dbReference type="NCBI Taxonomy" id="83333"/>
    <lineage>
        <taxon>Bacteria</taxon>
        <taxon>Pseudomonadati</taxon>
        <taxon>Pseudomonadota</taxon>
        <taxon>Gammaproteobacteria</taxon>
        <taxon>Enterobacterales</taxon>
        <taxon>Enterobacteriaceae</taxon>
        <taxon>Escherichia</taxon>
    </lineage>
</organism>
<feature type="chain" id="PRO_0000060174" description="Spermidine/putrescine transport system permease protein PotB">
    <location>
        <begin position="1"/>
        <end position="275"/>
    </location>
</feature>
<feature type="transmembrane region" description="Helical" evidence="2">
    <location>
        <begin position="1"/>
        <end position="21"/>
    </location>
</feature>
<feature type="topological domain" description="Periplasmic" evidence="1">
    <location>
        <begin position="22"/>
        <end position="60"/>
    </location>
</feature>
<feature type="transmembrane region" description="Helical" evidence="2">
    <location>
        <begin position="61"/>
        <end position="81"/>
    </location>
</feature>
<feature type="topological domain" description="Cytoplasmic" evidence="1">
    <location>
        <begin position="82"/>
        <end position="89"/>
    </location>
</feature>
<feature type="transmembrane region" description="Helical" evidence="2">
    <location>
        <begin position="90"/>
        <end position="110"/>
    </location>
</feature>
<feature type="topological domain" description="Periplasmic" evidence="1">
    <location>
        <begin position="111"/>
        <end position="135"/>
    </location>
</feature>
<feature type="transmembrane region" description="Helical" evidence="2">
    <location>
        <begin position="136"/>
        <end position="156"/>
    </location>
</feature>
<feature type="topological domain" description="Cytoplasmic" evidence="1">
    <location>
        <begin position="157"/>
        <end position="187"/>
    </location>
</feature>
<feature type="transmembrane region" description="Helical" evidence="2">
    <location>
        <begin position="188"/>
        <end position="208"/>
    </location>
</feature>
<feature type="topological domain" description="Periplasmic" evidence="1">
    <location>
        <begin position="209"/>
        <end position="241"/>
    </location>
</feature>
<feature type="transmembrane region" description="Helical" evidence="2">
    <location>
        <begin position="242"/>
        <end position="262"/>
    </location>
</feature>
<feature type="topological domain" description="Cytoplasmic" evidence="1">
    <location>
        <begin position="263"/>
        <end position="275"/>
    </location>
</feature>
<feature type="domain" description="ABC transmembrane type-1" evidence="2">
    <location>
        <begin position="55"/>
        <end position="261"/>
    </location>
</feature>
<proteinExistence type="evidence at protein level"/>
<name>POTB_ECOLI</name>